<proteinExistence type="evidence at transcript level"/>
<protein>
    <recommendedName>
        <fullName evidence="4">Lectin 9</fullName>
        <shortName evidence="4">MtLec9</shortName>
    </recommendedName>
    <alternativeName>
        <fullName evidence="5">Agglutinin LEC9</fullName>
    </alternativeName>
</protein>
<dbReference type="EMBL" id="DQ314211">
    <property type="protein sequence ID" value="ABC47815.1"/>
    <property type="molecule type" value="mRNA"/>
</dbReference>
<dbReference type="EMBL" id="EU306659">
    <property type="protein sequence ID" value="ABY48146.1"/>
    <property type="molecule type" value="Genomic_DNA"/>
</dbReference>
<dbReference type="EMBL" id="CM001221">
    <property type="protein sequence ID" value="AES95926.1"/>
    <property type="molecule type" value="Genomic_DNA"/>
</dbReference>
<dbReference type="EMBL" id="PSQE01000005">
    <property type="protein sequence ID" value="RHN54886.1"/>
    <property type="molecule type" value="Genomic_DNA"/>
</dbReference>
<dbReference type="RefSeq" id="XP_003612968.1">
    <property type="nucleotide sequence ID" value="XM_003612920.1"/>
</dbReference>
<dbReference type="SMR" id="Q2PP74"/>
<dbReference type="STRING" id="3880.A9YWS5"/>
<dbReference type="GlyCosmos" id="Q2PP74">
    <property type="glycosylation" value="4 sites, No reported glycans"/>
</dbReference>
<dbReference type="PaxDb" id="3880-AES95926"/>
<dbReference type="EnsemblPlants" id="rna29984">
    <property type="protein sequence ID" value="RHN54886.1"/>
    <property type="gene ID" value="gene29984"/>
</dbReference>
<dbReference type="GeneID" id="11407841"/>
<dbReference type="Gramene" id="rna29984">
    <property type="protein sequence ID" value="RHN54886.1"/>
    <property type="gene ID" value="gene29984"/>
</dbReference>
<dbReference type="KEGG" id="mtr:11407841"/>
<dbReference type="eggNOG" id="ENOG502QTX3">
    <property type="taxonomic scope" value="Eukaryota"/>
</dbReference>
<dbReference type="HOGENOM" id="CLU_000288_62_2_1"/>
<dbReference type="OrthoDB" id="2014828at2759"/>
<dbReference type="Proteomes" id="UP000002051">
    <property type="component" value="Chromosome 5"/>
</dbReference>
<dbReference type="Proteomes" id="UP000265566">
    <property type="component" value="Chromosome 5"/>
</dbReference>
<dbReference type="GO" id="GO:0030246">
    <property type="term" value="F:carbohydrate binding"/>
    <property type="evidence" value="ECO:0007669"/>
    <property type="project" value="UniProtKB-KW"/>
</dbReference>
<dbReference type="GO" id="GO:0009610">
    <property type="term" value="P:response to symbiotic fungus"/>
    <property type="evidence" value="ECO:0000270"/>
    <property type="project" value="UniProtKB"/>
</dbReference>
<dbReference type="CDD" id="cd06899">
    <property type="entry name" value="lectin_legume_LecRK_Arcelin_ConA"/>
    <property type="match status" value="1"/>
</dbReference>
<dbReference type="Gene3D" id="2.60.120.200">
    <property type="match status" value="1"/>
</dbReference>
<dbReference type="InterPro" id="IPR013320">
    <property type="entry name" value="ConA-like_dom_sf"/>
</dbReference>
<dbReference type="InterPro" id="IPR016363">
    <property type="entry name" value="L-lectin"/>
</dbReference>
<dbReference type="InterPro" id="IPR000985">
    <property type="entry name" value="Lectin_LegA_CS"/>
</dbReference>
<dbReference type="InterPro" id="IPR001220">
    <property type="entry name" value="Legume_lectin_dom"/>
</dbReference>
<dbReference type="InterPro" id="IPR050258">
    <property type="entry name" value="Leguminous_Lectin"/>
</dbReference>
<dbReference type="PANTHER" id="PTHR32401">
    <property type="entry name" value="CONCANAVALIN A-LIKE LECTIN FAMILY PROTEIN"/>
    <property type="match status" value="1"/>
</dbReference>
<dbReference type="PANTHER" id="PTHR32401:SF31">
    <property type="entry name" value="LECTIN 6"/>
    <property type="match status" value="1"/>
</dbReference>
<dbReference type="Pfam" id="PF00139">
    <property type="entry name" value="Lectin_legB"/>
    <property type="match status" value="1"/>
</dbReference>
<dbReference type="PIRSF" id="PIRSF002690">
    <property type="entry name" value="L-type_lectin_plant"/>
    <property type="match status" value="1"/>
</dbReference>
<dbReference type="SUPFAM" id="SSF49899">
    <property type="entry name" value="Concanavalin A-like lectins/glucanases"/>
    <property type="match status" value="1"/>
</dbReference>
<dbReference type="PROSITE" id="PS00308">
    <property type="entry name" value="LECTIN_LEGUME_ALPHA"/>
    <property type="match status" value="1"/>
</dbReference>
<reference key="1">
    <citation type="journal article" date="2005" name="Mol. Plant Microbe Interact.">
        <title>Combined transcriptome profiling reveals a novel family of arbuscular mycorrhizal-specific Medicago truncatula lectin genes.</title>
        <authorList>
            <person name="Frenzel A."/>
            <person name="Manthey K."/>
            <person name="Perlick A.M."/>
            <person name="Meyer F."/>
            <person name="Puehler A."/>
            <person name="Kuester H."/>
            <person name="Krajinski F."/>
        </authorList>
    </citation>
    <scope>NUCLEOTIDE SEQUENCE [MRNA]</scope>
    <scope>INDUCTION BY ARBUSCULAR MYCORRHIZAL FUNGI</scope>
    <source>
        <strain>cv. Jemalong A17</strain>
    </source>
</reference>
<reference key="2">
    <citation type="journal article" date="2005" name="Mol. Genet. Genomics">
        <title>Significant microsynteny with new evolutionary highlights is detected between Arabidopsis and legume model plants despite the lack of macrosynteny.</title>
        <authorList>
            <person name="Kevei Z."/>
            <person name="Seres A."/>
            <person name="Kereszt A."/>
            <person name="Kalo P."/>
            <person name="Kiss P."/>
            <person name="Toth G."/>
            <person name="Endre G."/>
            <person name="Kiss G.B."/>
        </authorList>
    </citation>
    <scope>NUCLEOTIDE SEQUENCE [LARGE SCALE GENOMIC DNA]</scope>
    <source>
        <strain>cv. Jemalong A17</strain>
    </source>
</reference>
<reference key="3">
    <citation type="journal article" date="2011" name="Nature">
        <title>The Medicago genome provides insight into the evolution of rhizobial symbioses.</title>
        <authorList>
            <person name="Young N.D."/>
            <person name="Debelle F."/>
            <person name="Oldroyd G.E.D."/>
            <person name="Geurts R."/>
            <person name="Cannon S.B."/>
            <person name="Udvardi M.K."/>
            <person name="Benedito V.A."/>
            <person name="Mayer K.F.X."/>
            <person name="Gouzy J."/>
            <person name="Schoof H."/>
            <person name="Van de Peer Y."/>
            <person name="Proost S."/>
            <person name="Cook D.R."/>
            <person name="Meyers B.C."/>
            <person name="Spannagl M."/>
            <person name="Cheung F."/>
            <person name="De Mita S."/>
            <person name="Krishnakumar V."/>
            <person name="Gundlach H."/>
            <person name="Zhou S."/>
            <person name="Mudge J."/>
            <person name="Bharti A.K."/>
            <person name="Murray J.D."/>
            <person name="Naoumkina M.A."/>
            <person name="Rosen B."/>
            <person name="Silverstein K.A.T."/>
            <person name="Tang H."/>
            <person name="Rombauts S."/>
            <person name="Zhao P.X."/>
            <person name="Zhou P."/>
            <person name="Barbe V."/>
            <person name="Bardou P."/>
            <person name="Bechner M."/>
            <person name="Bellec A."/>
            <person name="Berger A."/>
            <person name="Berges H."/>
            <person name="Bidwell S."/>
            <person name="Bisseling T."/>
            <person name="Choisne N."/>
            <person name="Couloux A."/>
            <person name="Denny R."/>
            <person name="Deshpande S."/>
            <person name="Dai X."/>
            <person name="Doyle J.J."/>
            <person name="Dudez A.-M."/>
            <person name="Farmer A.D."/>
            <person name="Fouteau S."/>
            <person name="Franken C."/>
            <person name="Gibelin C."/>
            <person name="Gish J."/>
            <person name="Goldstein S."/>
            <person name="Gonzalez A.J."/>
            <person name="Green P.J."/>
            <person name="Hallab A."/>
            <person name="Hartog M."/>
            <person name="Hua A."/>
            <person name="Humphray S.J."/>
            <person name="Jeong D.-H."/>
            <person name="Jing Y."/>
            <person name="Jocker A."/>
            <person name="Kenton S.M."/>
            <person name="Kim D.-J."/>
            <person name="Klee K."/>
            <person name="Lai H."/>
            <person name="Lang C."/>
            <person name="Lin S."/>
            <person name="Macmil S.L."/>
            <person name="Magdelenat G."/>
            <person name="Matthews L."/>
            <person name="McCorrison J."/>
            <person name="Monaghan E.L."/>
            <person name="Mun J.-H."/>
            <person name="Najar F.Z."/>
            <person name="Nicholson C."/>
            <person name="Noirot C."/>
            <person name="O'Bleness M."/>
            <person name="Paule C.R."/>
            <person name="Poulain J."/>
            <person name="Prion F."/>
            <person name="Qin B."/>
            <person name="Qu C."/>
            <person name="Retzel E.F."/>
            <person name="Riddle C."/>
            <person name="Sallet E."/>
            <person name="Samain S."/>
            <person name="Samson N."/>
            <person name="Sanders I."/>
            <person name="Saurat O."/>
            <person name="Scarpelli C."/>
            <person name="Schiex T."/>
            <person name="Segurens B."/>
            <person name="Severin A.J."/>
            <person name="Sherrier D.J."/>
            <person name="Shi R."/>
            <person name="Sims S."/>
            <person name="Singer S.R."/>
            <person name="Sinharoy S."/>
            <person name="Sterck L."/>
            <person name="Viollet A."/>
            <person name="Wang B.-B."/>
            <person name="Wang K."/>
            <person name="Wang M."/>
            <person name="Wang X."/>
            <person name="Warfsmann J."/>
            <person name="Weissenbach J."/>
            <person name="White D.D."/>
            <person name="White J.D."/>
            <person name="Wiley G.B."/>
            <person name="Wincker P."/>
            <person name="Xing Y."/>
            <person name="Yang L."/>
            <person name="Yao Z."/>
            <person name="Ying F."/>
            <person name="Zhai J."/>
            <person name="Zhou L."/>
            <person name="Zuber A."/>
            <person name="Denarie J."/>
            <person name="Dixon R.A."/>
            <person name="May G.D."/>
            <person name="Schwartz D.C."/>
            <person name="Rogers J."/>
            <person name="Quetier F."/>
            <person name="Town C.D."/>
            <person name="Roe B.A."/>
        </authorList>
    </citation>
    <scope>NUCLEOTIDE SEQUENCE [LARGE SCALE GENOMIC DNA]</scope>
    <source>
        <strain>cv. Jemalong A17</strain>
    </source>
</reference>
<reference key="4">
    <citation type="journal article" date="2014" name="BMC Genomics">
        <title>An improved genome release (version Mt4.0) for the model legume Medicago truncatula.</title>
        <authorList>
            <person name="Tang H."/>
            <person name="Krishnakumar V."/>
            <person name="Bidwell S."/>
            <person name="Rosen B."/>
            <person name="Chan A."/>
            <person name="Zhou S."/>
            <person name="Gentzbittel L."/>
            <person name="Childs K.L."/>
            <person name="Yandell M."/>
            <person name="Gundlach H."/>
            <person name="Mayer K.F."/>
            <person name="Schwartz D.C."/>
            <person name="Town C.D."/>
        </authorList>
    </citation>
    <scope>GENOME REANNOTATION</scope>
    <source>
        <strain>cv. Jemalong A17</strain>
    </source>
</reference>
<reference key="5">
    <citation type="journal article" date="2018" name="Nat. Plants">
        <title>Whole-genome landscape of Medicago truncatula symbiotic genes.</title>
        <authorList>
            <person name="Pecrix Y."/>
            <person name="Staton S.E."/>
            <person name="Sallet E."/>
            <person name="Lelandais-Briere C."/>
            <person name="Moreau S."/>
            <person name="Carrere S."/>
            <person name="Blein T."/>
            <person name="Jardinaud M.F."/>
            <person name="Latrasse D."/>
            <person name="Zouine M."/>
            <person name="Zahm M."/>
            <person name="Kreplak J."/>
            <person name="Mayjonade B."/>
            <person name="Satge C."/>
            <person name="Perez M."/>
            <person name="Cauet S."/>
            <person name="Marande W."/>
            <person name="Chantry-Darmon C."/>
            <person name="Lopez-Roques C."/>
            <person name="Bouchez O."/>
            <person name="Berard A."/>
            <person name="Debelle F."/>
            <person name="Munos S."/>
            <person name="Bendahmane A."/>
            <person name="Berges H."/>
            <person name="Niebel A."/>
            <person name="Buitink J."/>
            <person name="Frugier F."/>
            <person name="Benhamed M."/>
            <person name="Crespi M."/>
            <person name="Gouzy J."/>
            <person name="Gamas P."/>
        </authorList>
    </citation>
    <scope>NUCLEOTIDE SEQUENCE [LARGE SCALE GENOMIC DNA]</scope>
    <source>
        <strain>cv. Jemalong A17</strain>
    </source>
</reference>
<gene>
    <name evidence="4" type="primary">LEC9</name>
    <name evidence="7" type="ordered locus">MTR_5g031120</name>
    <name evidence="8" type="ORF">MtrunA17_Chr5g0411751</name>
</gene>
<comment type="function">
    <text evidence="6">May be involved in arbuscular mycorrhizal (AM) symbiosis with AM fungi.</text>
</comment>
<comment type="induction">
    <text evidence="3">Accumulates in roots during colonization by arbuscular mycorrhizal (AM) fungi (e.g. Glomus intraradices).</text>
</comment>
<comment type="similarity">
    <text evidence="5">Belongs to the leguminous lectin family.</text>
</comment>
<organism>
    <name type="scientific">Medicago truncatula</name>
    <name type="common">Barrel medic</name>
    <name type="synonym">Medicago tribuloides</name>
    <dbReference type="NCBI Taxonomy" id="3880"/>
    <lineage>
        <taxon>Eukaryota</taxon>
        <taxon>Viridiplantae</taxon>
        <taxon>Streptophyta</taxon>
        <taxon>Embryophyta</taxon>
        <taxon>Tracheophyta</taxon>
        <taxon>Spermatophyta</taxon>
        <taxon>Magnoliopsida</taxon>
        <taxon>eudicotyledons</taxon>
        <taxon>Gunneridae</taxon>
        <taxon>Pentapetalae</taxon>
        <taxon>rosids</taxon>
        <taxon>fabids</taxon>
        <taxon>Fabales</taxon>
        <taxon>Fabaceae</taxon>
        <taxon>Papilionoideae</taxon>
        <taxon>50 kb inversion clade</taxon>
        <taxon>NPAAA clade</taxon>
        <taxon>Hologalegina</taxon>
        <taxon>IRL clade</taxon>
        <taxon>Trifolieae</taxon>
        <taxon>Medicago</taxon>
    </lineage>
</organism>
<sequence length="279" mass="30220">MALSSALIKIFITFLFLQNHVNSQYSSPSKPQPSLGSTISFSITKFDDESPNIFVKGDASISNGVLSLTKTDKYSGKPLQKSVGRATHLTPIHIWDETSGELADFSTSFSFIVNTNGSRLHGDGFTFFLGPLHFDLPKNSSGGYLGLFNPETALIPSQNPIVAIEFDSFTNGWDPASPSQYPHIGIDVGSIDSRATVNWPLDFVQTNALGEASINYNSESKRLSVFVAYPGSGKNATGVSFVVDLRSVLPEWVRVGFSAATGELVETHDIINWSFEAAL</sequence>
<name>LEC9_MEDTR</name>
<feature type="signal peptide" evidence="1">
    <location>
        <begin position="1"/>
        <end position="23"/>
    </location>
</feature>
<feature type="chain" id="PRO_5022531551" description="Lectin 9">
    <location>
        <begin position="24"/>
        <end position="279"/>
    </location>
</feature>
<feature type="glycosylation site" description="N-linked (GlcNAc...) asparagine" evidence="2">
    <location>
        <position position="116"/>
    </location>
</feature>
<feature type="glycosylation site" description="N-linked (GlcNAc...) asparagine" evidence="2">
    <location>
        <position position="139"/>
    </location>
</feature>
<feature type="glycosylation site" description="N-linked (GlcNAc...) asparagine" evidence="2">
    <location>
        <position position="235"/>
    </location>
</feature>
<feature type="glycosylation site" description="N-linked (GlcNAc...) asparagine" evidence="2">
    <location>
        <position position="272"/>
    </location>
</feature>
<feature type="sequence conflict" description="In Ref. 2; ABY48146 and 3; AES95926." evidence="5" ref="2 3">
    <original>I</original>
    <variation>M</variation>
    <location>
        <position position="43"/>
    </location>
</feature>
<evidence type="ECO:0000255" key="1"/>
<evidence type="ECO:0000255" key="2">
    <source>
        <dbReference type="PROSITE-ProRule" id="PRU00498"/>
    </source>
</evidence>
<evidence type="ECO:0000269" key="3">
    <source>
    </source>
</evidence>
<evidence type="ECO:0000303" key="4">
    <source>
    </source>
</evidence>
<evidence type="ECO:0000305" key="5"/>
<evidence type="ECO:0000305" key="6">
    <source>
    </source>
</evidence>
<evidence type="ECO:0000312" key="7">
    <source>
        <dbReference type="EMBL" id="AES95926.1"/>
    </source>
</evidence>
<evidence type="ECO:0000312" key="8">
    <source>
        <dbReference type="EMBL" id="RHN54886.1"/>
    </source>
</evidence>
<keyword id="KW-0325">Glycoprotein</keyword>
<keyword id="KW-0430">Lectin</keyword>
<keyword id="KW-1185">Reference proteome</keyword>
<keyword id="KW-0732">Signal</keyword>
<accession>Q2PP74</accession>
<accession>A9YWS5</accession>